<proteinExistence type="inferred from homology"/>
<comment type="catalytic activity">
    <reaction evidence="1">
        <text>2-formamido-N(1)-(5-O-phospho-beta-D-ribosyl)acetamidine + ATP = 5-amino-1-(5-phospho-beta-D-ribosyl)imidazole + ADP + phosphate + H(+)</text>
        <dbReference type="Rhea" id="RHEA:23032"/>
        <dbReference type="ChEBI" id="CHEBI:15378"/>
        <dbReference type="ChEBI" id="CHEBI:30616"/>
        <dbReference type="ChEBI" id="CHEBI:43474"/>
        <dbReference type="ChEBI" id="CHEBI:137981"/>
        <dbReference type="ChEBI" id="CHEBI:147287"/>
        <dbReference type="ChEBI" id="CHEBI:456216"/>
        <dbReference type="EC" id="6.3.3.1"/>
    </reaction>
</comment>
<comment type="pathway">
    <text evidence="1">Purine metabolism; IMP biosynthesis via de novo pathway; 5-amino-1-(5-phospho-D-ribosyl)imidazole from N(2)-formyl-N(1)-(5-phospho-D-ribosyl)glycinamide: step 2/2.</text>
</comment>
<comment type="subcellular location">
    <subcellularLocation>
        <location evidence="1">Cytoplasm</location>
    </subcellularLocation>
</comment>
<comment type="similarity">
    <text evidence="1">Belongs to the AIR synthase family.</text>
</comment>
<protein>
    <recommendedName>
        <fullName evidence="1">Phosphoribosylformylglycinamidine cyclo-ligase</fullName>
        <ecNumber evidence="1">6.3.3.1</ecNumber>
    </recommendedName>
    <alternativeName>
        <fullName evidence="1">AIR synthase</fullName>
    </alternativeName>
    <alternativeName>
        <fullName evidence="1">AIRS</fullName>
    </alternativeName>
    <alternativeName>
        <fullName evidence="1">Phosphoribosyl-aminoimidazole synthetase</fullName>
    </alternativeName>
</protein>
<feature type="chain" id="PRO_1000046435" description="Phosphoribosylformylglycinamidine cyclo-ligase">
    <location>
        <begin position="1"/>
        <end position="345"/>
    </location>
</feature>
<sequence length="345" mass="36619">MTDKTSLSYKDAGVDIDAGNALVDRIKGVVKKTRRPEVMGGLGGFGALCALPQKYREPVLVSGTDGVGTKLRLAMDLKRHDTIGIDLVAMCVNDLVVQGAEPLFFLDYYATGKLDVDTAASVINGIAEGCLQSGCALVGGETAEMPGMYHGDDYDVAGFCVGVVEKSEIIDGSKVADGDVLVALASSGPHSNGYSLVRKILEVSGADPQTTELDGKPLADHLLAPTRIYVKPVLELIEKLEVHAIAHLTGGGFWENIPRVLPDNTQAVIDEASWQWPAVFNWLQQAGNVSRHEMYRTFNCGVGMVIALPAAEADNAVALLNSLGETAWKIGAIKASDAQERVVIA</sequence>
<evidence type="ECO:0000255" key="1">
    <source>
        <dbReference type="HAMAP-Rule" id="MF_00741"/>
    </source>
</evidence>
<keyword id="KW-0067">ATP-binding</keyword>
<keyword id="KW-0963">Cytoplasm</keyword>
<keyword id="KW-0436">Ligase</keyword>
<keyword id="KW-0547">Nucleotide-binding</keyword>
<keyword id="KW-0658">Purine biosynthesis</keyword>
<keyword id="KW-1185">Reference proteome</keyword>
<dbReference type="EC" id="6.3.3.1" evidence="1"/>
<dbReference type="EMBL" id="CP000783">
    <property type="protein sequence ID" value="ABU76039.1"/>
    <property type="molecule type" value="Genomic_DNA"/>
</dbReference>
<dbReference type="RefSeq" id="WP_007869947.1">
    <property type="nucleotide sequence ID" value="NC_009778.1"/>
</dbReference>
<dbReference type="SMR" id="A7ML12"/>
<dbReference type="GeneID" id="56729647"/>
<dbReference type="KEGG" id="esa:ESA_00762"/>
<dbReference type="HOGENOM" id="CLU_047116_0_0_6"/>
<dbReference type="UniPathway" id="UPA00074">
    <property type="reaction ID" value="UER00129"/>
</dbReference>
<dbReference type="Proteomes" id="UP000000260">
    <property type="component" value="Chromosome"/>
</dbReference>
<dbReference type="GO" id="GO:0005829">
    <property type="term" value="C:cytosol"/>
    <property type="evidence" value="ECO:0007669"/>
    <property type="project" value="TreeGrafter"/>
</dbReference>
<dbReference type="GO" id="GO:0005524">
    <property type="term" value="F:ATP binding"/>
    <property type="evidence" value="ECO:0007669"/>
    <property type="project" value="UniProtKB-KW"/>
</dbReference>
<dbReference type="GO" id="GO:0004637">
    <property type="term" value="F:phosphoribosylamine-glycine ligase activity"/>
    <property type="evidence" value="ECO:0007669"/>
    <property type="project" value="TreeGrafter"/>
</dbReference>
<dbReference type="GO" id="GO:0004641">
    <property type="term" value="F:phosphoribosylformylglycinamidine cyclo-ligase activity"/>
    <property type="evidence" value="ECO:0007669"/>
    <property type="project" value="UniProtKB-UniRule"/>
</dbReference>
<dbReference type="GO" id="GO:0006189">
    <property type="term" value="P:'de novo' IMP biosynthetic process"/>
    <property type="evidence" value="ECO:0007669"/>
    <property type="project" value="UniProtKB-UniRule"/>
</dbReference>
<dbReference type="GO" id="GO:0046084">
    <property type="term" value="P:adenine biosynthetic process"/>
    <property type="evidence" value="ECO:0007669"/>
    <property type="project" value="TreeGrafter"/>
</dbReference>
<dbReference type="CDD" id="cd02196">
    <property type="entry name" value="PurM"/>
    <property type="match status" value="1"/>
</dbReference>
<dbReference type="FunFam" id="3.30.1330.10:FF:000001">
    <property type="entry name" value="Phosphoribosylformylglycinamidine cyclo-ligase"/>
    <property type="match status" value="1"/>
</dbReference>
<dbReference type="FunFam" id="3.90.650.10:FF:000001">
    <property type="entry name" value="Phosphoribosylformylglycinamidine cyclo-ligase"/>
    <property type="match status" value="1"/>
</dbReference>
<dbReference type="Gene3D" id="3.90.650.10">
    <property type="entry name" value="PurM-like C-terminal domain"/>
    <property type="match status" value="1"/>
</dbReference>
<dbReference type="Gene3D" id="3.30.1330.10">
    <property type="entry name" value="PurM-like, N-terminal domain"/>
    <property type="match status" value="1"/>
</dbReference>
<dbReference type="HAMAP" id="MF_00741">
    <property type="entry name" value="AIRS"/>
    <property type="match status" value="1"/>
</dbReference>
<dbReference type="InterPro" id="IPR010918">
    <property type="entry name" value="PurM-like_C_dom"/>
</dbReference>
<dbReference type="InterPro" id="IPR036676">
    <property type="entry name" value="PurM-like_C_sf"/>
</dbReference>
<dbReference type="InterPro" id="IPR016188">
    <property type="entry name" value="PurM-like_N"/>
</dbReference>
<dbReference type="InterPro" id="IPR036921">
    <property type="entry name" value="PurM-like_N_sf"/>
</dbReference>
<dbReference type="InterPro" id="IPR004733">
    <property type="entry name" value="PurM_cligase"/>
</dbReference>
<dbReference type="NCBIfam" id="TIGR00878">
    <property type="entry name" value="purM"/>
    <property type="match status" value="1"/>
</dbReference>
<dbReference type="PANTHER" id="PTHR10520:SF12">
    <property type="entry name" value="TRIFUNCTIONAL PURINE BIOSYNTHETIC PROTEIN ADENOSINE-3"/>
    <property type="match status" value="1"/>
</dbReference>
<dbReference type="PANTHER" id="PTHR10520">
    <property type="entry name" value="TRIFUNCTIONAL PURINE BIOSYNTHETIC PROTEIN ADENOSINE-3-RELATED"/>
    <property type="match status" value="1"/>
</dbReference>
<dbReference type="Pfam" id="PF00586">
    <property type="entry name" value="AIRS"/>
    <property type="match status" value="1"/>
</dbReference>
<dbReference type="Pfam" id="PF02769">
    <property type="entry name" value="AIRS_C"/>
    <property type="match status" value="1"/>
</dbReference>
<dbReference type="SUPFAM" id="SSF56042">
    <property type="entry name" value="PurM C-terminal domain-like"/>
    <property type="match status" value="1"/>
</dbReference>
<dbReference type="SUPFAM" id="SSF55326">
    <property type="entry name" value="PurM N-terminal domain-like"/>
    <property type="match status" value="1"/>
</dbReference>
<reference key="1">
    <citation type="journal article" date="2010" name="PLoS ONE">
        <title>Genome sequence of Cronobacter sakazakii BAA-894 and comparative genomic hybridization analysis with other Cronobacter species.</title>
        <authorList>
            <person name="Kucerova E."/>
            <person name="Clifton S.W."/>
            <person name="Xia X.Q."/>
            <person name="Long F."/>
            <person name="Porwollik S."/>
            <person name="Fulton L."/>
            <person name="Fronick C."/>
            <person name="Minx P."/>
            <person name="Kyung K."/>
            <person name="Warren W."/>
            <person name="Fulton R."/>
            <person name="Feng D."/>
            <person name="Wollam A."/>
            <person name="Shah N."/>
            <person name="Bhonagiri V."/>
            <person name="Nash W.E."/>
            <person name="Hallsworth-Pepin K."/>
            <person name="Wilson R.K."/>
            <person name="McClelland M."/>
            <person name="Forsythe S.J."/>
        </authorList>
    </citation>
    <scope>NUCLEOTIDE SEQUENCE [LARGE SCALE GENOMIC DNA]</scope>
    <source>
        <strain>ATCC BAA-894</strain>
    </source>
</reference>
<accession>A7ML12</accession>
<name>PUR5_CROS8</name>
<gene>
    <name evidence="1" type="primary">purM</name>
    <name type="ordered locus">ESA_00762</name>
</gene>
<organism>
    <name type="scientific">Cronobacter sakazakii (strain ATCC BAA-894)</name>
    <name type="common">Enterobacter sakazakii</name>
    <dbReference type="NCBI Taxonomy" id="290339"/>
    <lineage>
        <taxon>Bacteria</taxon>
        <taxon>Pseudomonadati</taxon>
        <taxon>Pseudomonadota</taxon>
        <taxon>Gammaproteobacteria</taxon>
        <taxon>Enterobacterales</taxon>
        <taxon>Enterobacteriaceae</taxon>
        <taxon>Cronobacter</taxon>
    </lineage>
</organism>